<name>YQEL_ECOLI</name>
<sequence length="26" mass="3203">MKDVDQIFDALDCHILREYLILLFYD</sequence>
<feature type="chain" id="PRO_0000381989" description="Uncharacterized protein YqeL">
    <location>
        <begin position="1"/>
        <end position="26"/>
    </location>
</feature>
<dbReference type="EMBL" id="U00096">
    <property type="protein sequence ID" value="ACO60005.1"/>
    <property type="molecule type" value="Genomic_DNA"/>
</dbReference>
<dbReference type="EMBL" id="AP009048">
    <property type="status" value="NOT_ANNOTATED_CDS"/>
    <property type="molecule type" value="Genomic_DNA"/>
</dbReference>
<dbReference type="RefSeq" id="WP_000655820.1">
    <property type="nucleotide sequence ID" value="NZ_LN832404.1"/>
</dbReference>
<dbReference type="RefSeq" id="YP_002791253.1">
    <property type="nucleotide sequence ID" value="NC_000913.3"/>
</dbReference>
<dbReference type="STRING" id="511145.b4683"/>
<dbReference type="PaxDb" id="511145-b4683"/>
<dbReference type="EnsemblBacteria" id="ACO60005">
    <property type="protein sequence ID" value="ACO60005"/>
    <property type="gene ID" value="b4683"/>
</dbReference>
<dbReference type="GeneID" id="7751637"/>
<dbReference type="KEGG" id="eco:b4683"/>
<dbReference type="PATRIC" id="fig|511145.12.peg.2947"/>
<dbReference type="InParanoid" id="C1P613"/>
<dbReference type="BioCyc" id="EcoCyc:MONOMER0-2877"/>
<dbReference type="PRO" id="PR:C1P613"/>
<dbReference type="Proteomes" id="UP000000625">
    <property type="component" value="Chromosome"/>
</dbReference>
<reference key="1">
    <citation type="journal article" date="1997" name="Science">
        <title>The complete genome sequence of Escherichia coli K-12.</title>
        <authorList>
            <person name="Blattner F.R."/>
            <person name="Plunkett G. III"/>
            <person name="Bloch C.A."/>
            <person name="Perna N.T."/>
            <person name="Burland V."/>
            <person name="Riley M."/>
            <person name="Collado-Vides J."/>
            <person name="Glasner J.D."/>
            <person name="Rode C.K."/>
            <person name="Mayhew G.F."/>
            <person name="Gregor J."/>
            <person name="Davis N.W."/>
            <person name="Kirkpatrick H.A."/>
            <person name="Goeden M.A."/>
            <person name="Rose D.J."/>
            <person name="Mau B."/>
            <person name="Shao Y."/>
        </authorList>
    </citation>
    <scope>NUCLEOTIDE SEQUENCE [LARGE SCALE GENOMIC DNA]</scope>
    <source>
        <strain>K12 / MG1655 / ATCC 47076</strain>
    </source>
</reference>
<reference key="2">
    <citation type="journal article" date="2006" name="Mol. Syst. Biol.">
        <title>Highly accurate genome sequences of Escherichia coli K-12 strains MG1655 and W3110.</title>
        <authorList>
            <person name="Hayashi K."/>
            <person name="Morooka N."/>
            <person name="Yamamoto Y."/>
            <person name="Fujita K."/>
            <person name="Isono K."/>
            <person name="Choi S."/>
            <person name="Ohtsubo E."/>
            <person name="Baba T."/>
            <person name="Wanner B.L."/>
            <person name="Mori H."/>
            <person name="Horiuchi T."/>
        </authorList>
    </citation>
    <scope>NUCLEOTIDE SEQUENCE [LARGE SCALE GENOMIC DNA]</scope>
    <source>
        <strain>K12 / W3110 / ATCC 27325 / DSM 5911</strain>
    </source>
</reference>
<reference key="3">
    <citation type="journal article" date="2008" name="Mol. Microbiol.">
        <title>Small membrane proteins found by comparative genomics and ribosome binding site models.</title>
        <authorList>
            <person name="Hemm M.R."/>
            <person name="Paul B.J."/>
            <person name="Schneider T.D."/>
            <person name="Storz G."/>
            <person name="Rudd K.E."/>
        </authorList>
    </citation>
    <scope>IDENTIFICATION</scope>
    <scope>INDUCTION</scope>
    <source>
        <strain>K12 / MG1655 / ATCC 47076</strain>
    </source>
</reference>
<reference key="4">
    <citation type="journal article" date="2010" name="J. Bacteriol.">
        <title>Small stress response proteins in Escherichia coli: proteins missed by classical proteomic studies.</title>
        <authorList>
            <person name="Hemm M.R."/>
            <person name="Paul B.J."/>
            <person name="Miranda-Rios J."/>
            <person name="Zhang A."/>
            <person name="Soltanzad N."/>
            <person name="Storz G."/>
        </authorList>
    </citation>
    <scope>INDUCTION</scope>
    <source>
        <strain>K12 / MG1655 / ATCC 47076</strain>
    </source>
</reference>
<comment type="induction">
    <text evidence="1 2">Constitutively expressed, induced at 45 degrees Celsius (at protein level).</text>
</comment>
<protein>
    <recommendedName>
        <fullName>Uncharacterized protein YqeL</fullName>
    </recommendedName>
</protein>
<evidence type="ECO:0000269" key="1">
    <source>
    </source>
</evidence>
<evidence type="ECO:0000269" key="2">
    <source>
    </source>
</evidence>
<accession>C1P613</accession>
<organism>
    <name type="scientific">Escherichia coli (strain K12)</name>
    <dbReference type="NCBI Taxonomy" id="83333"/>
    <lineage>
        <taxon>Bacteria</taxon>
        <taxon>Pseudomonadati</taxon>
        <taxon>Pseudomonadota</taxon>
        <taxon>Gammaproteobacteria</taxon>
        <taxon>Enterobacterales</taxon>
        <taxon>Enterobacteriaceae</taxon>
        <taxon>Escherichia</taxon>
    </lineage>
</organism>
<gene>
    <name type="primary">yqeL</name>
    <name type="ordered locus">b4683</name>
    <name type="ordered locus">JW5455.1</name>
</gene>
<keyword id="KW-1185">Reference proteome</keyword>
<keyword id="KW-0346">Stress response</keyword>
<proteinExistence type="evidence at protein level"/>